<accession>Q7MIG2</accession>
<sequence>MTTNPKPAYQRILLKLSGEALQGSEGFGIDPTVLDRMAQEVKELVELGVQVGVVIGGGNLFRGAGLAQAGMNRVVGDHMGMLATVMNGLAMRDALHRAYVNARVMSAIPLNGVCDDYNWADAIRELRQGRVVIFAAGTGNPFFTTDSAACLRGIEIEADVVLKATKVDGVFTADPVANPDAELYDKLSYTDVLEKELKVMDLAAFTLARDHKMPIRVFNMNKPGALRRVVMGEAEGTLITA</sequence>
<gene>
    <name evidence="1" type="primary">pyrH</name>
    <name type="ordered locus">VV2555</name>
</gene>
<keyword id="KW-0021">Allosteric enzyme</keyword>
<keyword id="KW-0067">ATP-binding</keyword>
<keyword id="KW-0963">Cytoplasm</keyword>
<keyword id="KW-0418">Kinase</keyword>
<keyword id="KW-0547">Nucleotide-binding</keyword>
<keyword id="KW-0665">Pyrimidine biosynthesis</keyword>
<keyword id="KW-0808">Transferase</keyword>
<comment type="function">
    <text evidence="1">Catalyzes the reversible phosphorylation of UMP to UDP.</text>
</comment>
<comment type="catalytic activity">
    <reaction evidence="1">
        <text>UMP + ATP = UDP + ADP</text>
        <dbReference type="Rhea" id="RHEA:24400"/>
        <dbReference type="ChEBI" id="CHEBI:30616"/>
        <dbReference type="ChEBI" id="CHEBI:57865"/>
        <dbReference type="ChEBI" id="CHEBI:58223"/>
        <dbReference type="ChEBI" id="CHEBI:456216"/>
        <dbReference type="EC" id="2.7.4.22"/>
    </reaction>
</comment>
<comment type="activity regulation">
    <text evidence="1">Allosterically activated by GTP. Inhibited by UTP.</text>
</comment>
<comment type="pathway">
    <text evidence="1">Pyrimidine metabolism; CTP biosynthesis via de novo pathway; UDP from UMP (UMPK route): step 1/1.</text>
</comment>
<comment type="subunit">
    <text evidence="1">Homohexamer.</text>
</comment>
<comment type="subcellular location">
    <subcellularLocation>
        <location evidence="1">Cytoplasm</location>
    </subcellularLocation>
</comment>
<comment type="similarity">
    <text evidence="1">Belongs to the UMP kinase family.</text>
</comment>
<comment type="sequence caution" evidence="2">
    <conflict type="erroneous initiation">
        <sequence resource="EMBL-CDS" id="BAC95319"/>
    </conflict>
</comment>
<name>PYRH_VIBVY</name>
<dbReference type="EC" id="2.7.4.22" evidence="1"/>
<dbReference type="EMBL" id="BA000037">
    <property type="protein sequence ID" value="BAC95319.1"/>
    <property type="status" value="ALT_INIT"/>
    <property type="molecule type" value="Genomic_DNA"/>
</dbReference>
<dbReference type="RefSeq" id="WP_011079764.1">
    <property type="nucleotide sequence ID" value="NC_005139.1"/>
</dbReference>
<dbReference type="SMR" id="Q7MIG2"/>
<dbReference type="STRING" id="672.VV93_v1c22740"/>
<dbReference type="KEGG" id="vvy:VV2555"/>
<dbReference type="eggNOG" id="COG0528">
    <property type="taxonomic scope" value="Bacteria"/>
</dbReference>
<dbReference type="HOGENOM" id="CLU_033861_0_0_6"/>
<dbReference type="UniPathway" id="UPA00159">
    <property type="reaction ID" value="UER00275"/>
</dbReference>
<dbReference type="Proteomes" id="UP000002675">
    <property type="component" value="Chromosome I"/>
</dbReference>
<dbReference type="GO" id="GO:0005829">
    <property type="term" value="C:cytosol"/>
    <property type="evidence" value="ECO:0007669"/>
    <property type="project" value="TreeGrafter"/>
</dbReference>
<dbReference type="GO" id="GO:0005524">
    <property type="term" value="F:ATP binding"/>
    <property type="evidence" value="ECO:0007669"/>
    <property type="project" value="UniProtKB-KW"/>
</dbReference>
<dbReference type="GO" id="GO:0033862">
    <property type="term" value="F:UMP kinase activity"/>
    <property type="evidence" value="ECO:0007669"/>
    <property type="project" value="UniProtKB-EC"/>
</dbReference>
<dbReference type="GO" id="GO:0044210">
    <property type="term" value="P:'de novo' CTP biosynthetic process"/>
    <property type="evidence" value="ECO:0007669"/>
    <property type="project" value="UniProtKB-UniRule"/>
</dbReference>
<dbReference type="GO" id="GO:0006225">
    <property type="term" value="P:UDP biosynthetic process"/>
    <property type="evidence" value="ECO:0007669"/>
    <property type="project" value="TreeGrafter"/>
</dbReference>
<dbReference type="CDD" id="cd04254">
    <property type="entry name" value="AAK_UMPK-PyrH-Ec"/>
    <property type="match status" value="1"/>
</dbReference>
<dbReference type="FunFam" id="3.40.1160.10:FF:000001">
    <property type="entry name" value="Uridylate kinase"/>
    <property type="match status" value="1"/>
</dbReference>
<dbReference type="Gene3D" id="3.40.1160.10">
    <property type="entry name" value="Acetylglutamate kinase-like"/>
    <property type="match status" value="1"/>
</dbReference>
<dbReference type="HAMAP" id="MF_01220_B">
    <property type="entry name" value="PyrH_B"/>
    <property type="match status" value="1"/>
</dbReference>
<dbReference type="InterPro" id="IPR036393">
    <property type="entry name" value="AceGlu_kinase-like_sf"/>
</dbReference>
<dbReference type="InterPro" id="IPR001048">
    <property type="entry name" value="Asp/Glu/Uridylate_kinase"/>
</dbReference>
<dbReference type="InterPro" id="IPR011817">
    <property type="entry name" value="Uridylate_kinase"/>
</dbReference>
<dbReference type="InterPro" id="IPR015963">
    <property type="entry name" value="Uridylate_kinase_bac"/>
</dbReference>
<dbReference type="NCBIfam" id="TIGR02075">
    <property type="entry name" value="pyrH_bact"/>
    <property type="match status" value="1"/>
</dbReference>
<dbReference type="PANTHER" id="PTHR42833">
    <property type="entry name" value="URIDYLATE KINASE"/>
    <property type="match status" value="1"/>
</dbReference>
<dbReference type="PANTHER" id="PTHR42833:SF4">
    <property type="entry name" value="URIDYLATE KINASE PUMPKIN, CHLOROPLASTIC"/>
    <property type="match status" value="1"/>
</dbReference>
<dbReference type="Pfam" id="PF00696">
    <property type="entry name" value="AA_kinase"/>
    <property type="match status" value="1"/>
</dbReference>
<dbReference type="PIRSF" id="PIRSF005650">
    <property type="entry name" value="Uridylate_kin"/>
    <property type="match status" value="1"/>
</dbReference>
<dbReference type="SUPFAM" id="SSF53633">
    <property type="entry name" value="Carbamate kinase-like"/>
    <property type="match status" value="1"/>
</dbReference>
<proteinExistence type="inferred from homology"/>
<organism>
    <name type="scientific">Vibrio vulnificus (strain YJ016)</name>
    <dbReference type="NCBI Taxonomy" id="196600"/>
    <lineage>
        <taxon>Bacteria</taxon>
        <taxon>Pseudomonadati</taxon>
        <taxon>Pseudomonadota</taxon>
        <taxon>Gammaproteobacteria</taxon>
        <taxon>Vibrionales</taxon>
        <taxon>Vibrionaceae</taxon>
        <taxon>Vibrio</taxon>
    </lineage>
</organism>
<feature type="chain" id="PRO_0000143906" description="Uridylate kinase">
    <location>
        <begin position="1"/>
        <end position="241"/>
    </location>
</feature>
<feature type="region of interest" description="Involved in allosteric activation by GTP" evidence="1">
    <location>
        <begin position="23"/>
        <end position="28"/>
    </location>
</feature>
<feature type="binding site" evidence="1">
    <location>
        <begin position="15"/>
        <end position="18"/>
    </location>
    <ligand>
        <name>ATP</name>
        <dbReference type="ChEBI" id="CHEBI:30616"/>
    </ligand>
</feature>
<feature type="binding site" evidence="1">
    <location>
        <position position="57"/>
    </location>
    <ligand>
        <name>UMP</name>
        <dbReference type="ChEBI" id="CHEBI:57865"/>
    </ligand>
</feature>
<feature type="binding site" evidence="1">
    <location>
        <position position="58"/>
    </location>
    <ligand>
        <name>ATP</name>
        <dbReference type="ChEBI" id="CHEBI:30616"/>
    </ligand>
</feature>
<feature type="binding site" evidence="1">
    <location>
        <position position="62"/>
    </location>
    <ligand>
        <name>ATP</name>
        <dbReference type="ChEBI" id="CHEBI:30616"/>
    </ligand>
</feature>
<feature type="binding site" evidence="1">
    <location>
        <position position="77"/>
    </location>
    <ligand>
        <name>UMP</name>
        <dbReference type="ChEBI" id="CHEBI:57865"/>
    </ligand>
</feature>
<feature type="binding site" evidence="1">
    <location>
        <begin position="138"/>
        <end position="145"/>
    </location>
    <ligand>
        <name>UMP</name>
        <dbReference type="ChEBI" id="CHEBI:57865"/>
    </ligand>
</feature>
<feature type="binding site" evidence="1">
    <location>
        <position position="165"/>
    </location>
    <ligand>
        <name>ATP</name>
        <dbReference type="ChEBI" id="CHEBI:30616"/>
    </ligand>
</feature>
<feature type="binding site" evidence="1">
    <location>
        <position position="171"/>
    </location>
    <ligand>
        <name>ATP</name>
        <dbReference type="ChEBI" id="CHEBI:30616"/>
    </ligand>
</feature>
<feature type="binding site" evidence="1">
    <location>
        <position position="174"/>
    </location>
    <ligand>
        <name>ATP</name>
        <dbReference type="ChEBI" id="CHEBI:30616"/>
    </ligand>
</feature>
<protein>
    <recommendedName>
        <fullName evidence="1">Uridylate kinase</fullName>
        <shortName evidence="1">UK</shortName>
        <ecNumber evidence="1">2.7.4.22</ecNumber>
    </recommendedName>
    <alternativeName>
        <fullName evidence="1">Uridine monophosphate kinase</fullName>
        <shortName evidence="1">UMP kinase</shortName>
        <shortName evidence="1">UMPK</shortName>
    </alternativeName>
</protein>
<evidence type="ECO:0000255" key="1">
    <source>
        <dbReference type="HAMAP-Rule" id="MF_01220"/>
    </source>
</evidence>
<evidence type="ECO:0000305" key="2"/>
<reference key="1">
    <citation type="journal article" date="2003" name="Genome Res.">
        <title>Comparative genome analysis of Vibrio vulnificus, a marine pathogen.</title>
        <authorList>
            <person name="Chen C.-Y."/>
            <person name="Wu K.-M."/>
            <person name="Chang Y.-C."/>
            <person name="Chang C.-H."/>
            <person name="Tsai H.-C."/>
            <person name="Liao T.-L."/>
            <person name="Liu Y.-M."/>
            <person name="Chen H.-J."/>
            <person name="Shen A.B.-T."/>
            <person name="Li J.-C."/>
            <person name="Su T.-L."/>
            <person name="Shao C.-P."/>
            <person name="Lee C.-T."/>
            <person name="Hor L.-I."/>
            <person name="Tsai S.-F."/>
        </authorList>
    </citation>
    <scope>NUCLEOTIDE SEQUENCE [LARGE SCALE GENOMIC DNA]</scope>
    <source>
        <strain>YJ016</strain>
    </source>
</reference>